<name>KCY_YERPG</name>
<reference key="1">
    <citation type="journal article" date="2010" name="J. Bacteriol.">
        <title>Genome sequence of the deep-rooted Yersinia pestis strain Angola reveals new insights into the evolution and pangenome of the plague bacterium.</title>
        <authorList>
            <person name="Eppinger M."/>
            <person name="Worsham P.L."/>
            <person name="Nikolich M.P."/>
            <person name="Riley D.R."/>
            <person name="Sebastian Y."/>
            <person name="Mou S."/>
            <person name="Achtman M."/>
            <person name="Lindler L.E."/>
            <person name="Ravel J."/>
        </authorList>
    </citation>
    <scope>NUCLEOTIDE SEQUENCE [LARGE SCALE GENOMIC DNA]</scope>
    <source>
        <strain>Angola</strain>
    </source>
</reference>
<accession>A9R7I3</accession>
<comment type="catalytic activity">
    <reaction evidence="1">
        <text>CMP + ATP = CDP + ADP</text>
        <dbReference type="Rhea" id="RHEA:11600"/>
        <dbReference type="ChEBI" id="CHEBI:30616"/>
        <dbReference type="ChEBI" id="CHEBI:58069"/>
        <dbReference type="ChEBI" id="CHEBI:60377"/>
        <dbReference type="ChEBI" id="CHEBI:456216"/>
        <dbReference type="EC" id="2.7.4.25"/>
    </reaction>
</comment>
<comment type="catalytic activity">
    <reaction evidence="1">
        <text>dCMP + ATP = dCDP + ADP</text>
        <dbReference type="Rhea" id="RHEA:25094"/>
        <dbReference type="ChEBI" id="CHEBI:30616"/>
        <dbReference type="ChEBI" id="CHEBI:57566"/>
        <dbReference type="ChEBI" id="CHEBI:58593"/>
        <dbReference type="ChEBI" id="CHEBI:456216"/>
        <dbReference type="EC" id="2.7.4.25"/>
    </reaction>
</comment>
<comment type="subcellular location">
    <subcellularLocation>
        <location evidence="1">Cytoplasm</location>
    </subcellularLocation>
</comment>
<comment type="similarity">
    <text evidence="1">Belongs to the cytidylate kinase family. Type 1 subfamily.</text>
</comment>
<evidence type="ECO:0000255" key="1">
    <source>
        <dbReference type="HAMAP-Rule" id="MF_00238"/>
    </source>
</evidence>
<feature type="chain" id="PRO_1000100706" description="Cytidylate kinase">
    <location>
        <begin position="1"/>
        <end position="230"/>
    </location>
</feature>
<feature type="binding site" evidence="1">
    <location>
        <begin position="12"/>
        <end position="20"/>
    </location>
    <ligand>
        <name>ATP</name>
        <dbReference type="ChEBI" id="CHEBI:30616"/>
    </ligand>
</feature>
<keyword id="KW-0067">ATP-binding</keyword>
<keyword id="KW-0963">Cytoplasm</keyword>
<keyword id="KW-0418">Kinase</keyword>
<keyword id="KW-0547">Nucleotide-binding</keyword>
<keyword id="KW-0808">Transferase</keyword>
<sequence length="230" mass="25195">MTAIAPVITVDGPSGAGKGTLCKALAESLNWRLLDSGAIYRVLALAALHHQVDISTEEALVPLAAHLDVRFVSQNGQLQVILEGEDVSNEIRTETVGNTASQAAAFPRVREALLRRQRAFREAPGLIADGRDMGTIVFPDAPVKIFLDASSQERAHRRMLQLQERGFNVNFERLLAEIQERDNRDRNRSVAPLVPAADALVLDSTSMSIEQVIEQALAYAQRILALPLKK</sequence>
<organism>
    <name type="scientific">Yersinia pestis bv. Antiqua (strain Angola)</name>
    <dbReference type="NCBI Taxonomy" id="349746"/>
    <lineage>
        <taxon>Bacteria</taxon>
        <taxon>Pseudomonadati</taxon>
        <taxon>Pseudomonadota</taxon>
        <taxon>Gammaproteobacteria</taxon>
        <taxon>Enterobacterales</taxon>
        <taxon>Yersiniaceae</taxon>
        <taxon>Yersinia</taxon>
    </lineage>
</organism>
<gene>
    <name evidence="1" type="primary">cmk</name>
    <name type="ordered locus">YpAngola_A1954</name>
</gene>
<dbReference type="EC" id="2.7.4.25" evidence="1"/>
<dbReference type="EMBL" id="CP000901">
    <property type="protein sequence ID" value="ABX88395.1"/>
    <property type="molecule type" value="Genomic_DNA"/>
</dbReference>
<dbReference type="RefSeq" id="WP_002211324.1">
    <property type="nucleotide sequence ID" value="NZ_CP009935.1"/>
</dbReference>
<dbReference type="SMR" id="A9R7I3"/>
<dbReference type="GeneID" id="57977187"/>
<dbReference type="KEGG" id="ypg:YpAngola_A1954"/>
<dbReference type="PATRIC" id="fig|349746.12.peg.2930"/>
<dbReference type="GO" id="GO:0005829">
    <property type="term" value="C:cytosol"/>
    <property type="evidence" value="ECO:0007669"/>
    <property type="project" value="TreeGrafter"/>
</dbReference>
<dbReference type="GO" id="GO:0005524">
    <property type="term" value="F:ATP binding"/>
    <property type="evidence" value="ECO:0007669"/>
    <property type="project" value="UniProtKB-UniRule"/>
</dbReference>
<dbReference type="GO" id="GO:0036430">
    <property type="term" value="F:CMP kinase activity"/>
    <property type="evidence" value="ECO:0007669"/>
    <property type="project" value="RHEA"/>
</dbReference>
<dbReference type="GO" id="GO:0036431">
    <property type="term" value="F:dCMP kinase activity"/>
    <property type="evidence" value="ECO:0007669"/>
    <property type="project" value="RHEA"/>
</dbReference>
<dbReference type="GO" id="GO:0015949">
    <property type="term" value="P:nucleobase-containing small molecule interconversion"/>
    <property type="evidence" value="ECO:0007669"/>
    <property type="project" value="TreeGrafter"/>
</dbReference>
<dbReference type="GO" id="GO:0006220">
    <property type="term" value="P:pyrimidine nucleotide metabolic process"/>
    <property type="evidence" value="ECO:0007669"/>
    <property type="project" value="UniProtKB-UniRule"/>
</dbReference>
<dbReference type="CDD" id="cd02020">
    <property type="entry name" value="CMPK"/>
    <property type="match status" value="1"/>
</dbReference>
<dbReference type="FunFam" id="3.40.50.300:FF:000262">
    <property type="entry name" value="Cytidylate kinase"/>
    <property type="match status" value="1"/>
</dbReference>
<dbReference type="Gene3D" id="3.40.50.300">
    <property type="entry name" value="P-loop containing nucleotide triphosphate hydrolases"/>
    <property type="match status" value="1"/>
</dbReference>
<dbReference type="HAMAP" id="MF_00238">
    <property type="entry name" value="Cytidyl_kinase_type1"/>
    <property type="match status" value="1"/>
</dbReference>
<dbReference type="InterPro" id="IPR003136">
    <property type="entry name" value="Cytidylate_kin"/>
</dbReference>
<dbReference type="InterPro" id="IPR011994">
    <property type="entry name" value="Cytidylate_kinase_dom"/>
</dbReference>
<dbReference type="InterPro" id="IPR027417">
    <property type="entry name" value="P-loop_NTPase"/>
</dbReference>
<dbReference type="NCBIfam" id="TIGR00017">
    <property type="entry name" value="cmk"/>
    <property type="match status" value="1"/>
</dbReference>
<dbReference type="PANTHER" id="PTHR21299:SF2">
    <property type="entry name" value="CYTIDYLATE KINASE"/>
    <property type="match status" value="1"/>
</dbReference>
<dbReference type="PANTHER" id="PTHR21299">
    <property type="entry name" value="CYTIDYLATE KINASE/PANTOATE-BETA-ALANINE LIGASE"/>
    <property type="match status" value="1"/>
</dbReference>
<dbReference type="Pfam" id="PF02224">
    <property type="entry name" value="Cytidylate_kin"/>
    <property type="match status" value="1"/>
</dbReference>
<dbReference type="SUPFAM" id="SSF52540">
    <property type="entry name" value="P-loop containing nucleoside triphosphate hydrolases"/>
    <property type="match status" value="1"/>
</dbReference>
<protein>
    <recommendedName>
        <fullName evidence="1">Cytidylate kinase</fullName>
        <shortName evidence="1">CK</shortName>
        <ecNumber evidence="1">2.7.4.25</ecNumber>
    </recommendedName>
    <alternativeName>
        <fullName evidence="1">Cytidine monophosphate kinase</fullName>
        <shortName evidence="1">CMP kinase</shortName>
    </alternativeName>
</protein>
<proteinExistence type="inferred from homology"/>